<proteinExistence type="inferred from homology"/>
<organism>
    <name type="scientific">Methanothermobacter thermautotrophicus (strain ATCC 29096 / DSM 1053 / JCM 10044 / NBRC 100330 / Delta H)</name>
    <name type="common">Methanobacterium thermoautotrophicum</name>
    <dbReference type="NCBI Taxonomy" id="187420"/>
    <lineage>
        <taxon>Archaea</taxon>
        <taxon>Methanobacteriati</taxon>
        <taxon>Methanobacteriota</taxon>
        <taxon>Methanomada group</taxon>
        <taxon>Methanobacteria</taxon>
        <taxon>Methanobacteriales</taxon>
        <taxon>Methanobacteriaceae</taxon>
        <taxon>Methanothermobacter</taxon>
    </lineage>
</organism>
<sequence length="1060" mass="116278">MPRDESINKVLIIGSGPIQIGQAAEFDYSGSQACKSLREEGIETVLVNSNPATIQTDMEMADRVYVEPLTPEIVAKIIQKEKPDAVLPTMGGQTGLNVATGLAEMGALEGVRVIGSSIETIRNVEDRDLFDSFMKKLNEPVPAARAVSSVEEALEAVEEIGYPVIVRPAFTLGGTGGGVAHSRDELIEIATRGLEMSFINQVLIDQSVLGWKEFEYEVMRDRNDTCIIVLCNMENIDPMGIHTGESVVVAPAQTLSDEDNQRLRDAAIKIIRALKIEGGCNIQFAVHPETGEYKVIEVNPRVSRSSALASKATGYPIAKIAAKIAVGMTLDEIQNDITKETPASFEPTIDYVVTKIPRWPFDKFKGISREIGVQMKSTGEVMAIGRTLEESLNKAIRSLDIGADGFTETPYTRADLENPTDQRLFQVYTALRDGMSIEEIHGLTQIDPFFLQKISNIAEFESSITRESLEDPRILLKAKRMGFSDSRLASLTGMDESSIRALRLENNIKPVYKMVDTCAAEFEARTPYYYGCYDLEDEVEVSDRRKVLIIGSGPIRIGQGIEFDYCCVHAAMALTEDGYETIMVNNNPETVSTDYDISDKLYFEPLTLEDVLAIIEKEKPEGVVVQFGGQTSINLAVPLAEAGVRILGTPHESIDRVEDRERFTEVLNKLGIPQAPYGIAKSFEDARAVAERIGYPVLVRPSYVLGGRAMEIVYDDVELEEYMREAVRVSPEHPILVDKFLEDAIEVDVDALCDGTDVYIGGIMEHIEEAGVHSGDSACVIPPQSIPEDIIDTIKEYTRKLALELEVVGLINIQYAVKPDSDPSVYILEANPRASRTVPFVSKATGVPLAKMAARLMMGAKLRDLGLTEEKDIEHVAVKESVFPFIKLPGADSVLGPEMKSTGEAMGIDENFGIAYYKSQLSASMDLLNEGKVFISVRDQDKDKIADIVKKADELGFRIMATRGTARAVSDIADIEVVRKVSQGSPNIRDAILDGEVGLIINTPSGKQSADDGYLIRRMAVELGIPYVTTLAGARAALNAIEAVRMGKITVKSLDEYHGM</sequence>
<comment type="function">
    <text evidence="1">Large subunit of the glutamine-dependent carbamoyl phosphate synthetase (CPSase). CPSase catalyzes the formation of carbamoyl phosphate from the ammonia moiety of glutamine, carbonate, and phosphate donated by ATP, constituting the first step of 2 biosynthetic pathways, one leading to arginine and/or urea and the other to pyrimidine nucleotides. The large subunit (synthetase) binds the substrates ammonia (free or transferred from glutamine from the small subunit), hydrogencarbonate and ATP and carries out an ATP-coupled ligase reaction, activating hydrogencarbonate by forming carboxy phosphate which reacts with ammonia to form carbamoyl phosphate.</text>
</comment>
<comment type="catalytic activity">
    <reaction evidence="1">
        <text>hydrogencarbonate + L-glutamine + 2 ATP + H2O = carbamoyl phosphate + L-glutamate + 2 ADP + phosphate + 2 H(+)</text>
        <dbReference type="Rhea" id="RHEA:18633"/>
        <dbReference type="ChEBI" id="CHEBI:15377"/>
        <dbReference type="ChEBI" id="CHEBI:15378"/>
        <dbReference type="ChEBI" id="CHEBI:17544"/>
        <dbReference type="ChEBI" id="CHEBI:29985"/>
        <dbReference type="ChEBI" id="CHEBI:30616"/>
        <dbReference type="ChEBI" id="CHEBI:43474"/>
        <dbReference type="ChEBI" id="CHEBI:58228"/>
        <dbReference type="ChEBI" id="CHEBI:58359"/>
        <dbReference type="ChEBI" id="CHEBI:456216"/>
        <dbReference type="EC" id="6.3.5.5"/>
    </reaction>
</comment>
<comment type="catalytic activity">
    <molecule>Carbamoyl phosphate synthase large chain</molecule>
    <reaction evidence="1">
        <text>hydrogencarbonate + NH4(+) + 2 ATP = carbamoyl phosphate + 2 ADP + phosphate + 2 H(+)</text>
        <dbReference type="Rhea" id="RHEA:18029"/>
        <dbReference type="ChEBI" id="CHEBI:15378"/>
        <dbReference type="ChEBI" id="CHEBI:17544"/>
        <dbReference type="ChEBI" id="CHEBI:28938"/>
        <dbReference type="ChEBI" id="CHEBI:30616"/>
        <dbReference type="ChEBI" id="CHEBI:43474"/>
        <dbReference type="ChEBI" id="CHEBI:58228"/>
        <dbReference type="ChEBI" id="CHEBI:456216"/>
        <dbReference type="EC" id="6.3.4.16"/>
    </reaction>
</comment>
<comment type="cofactor">
    <cofactor evidence="1">
        <name>Mg(2+)</name>
        <dbReference type="ChEBI" id="CHEBI:18420"/>
    </cofactor>
    <cofactor evidence="1">
        <name>Mn(2+)</name>
        <dbReference type="ChEBI" id="CHEBI:29035"/>
    </cofactor>
    <text evidence="1">Binds 4 Mg(2+) or Mn(2+) ions per subunit.</text>
</comment>
<comment type="pathway">
    <text evidence="1">Amino-acid biosynthesis; L-arginine biosynthesis; carbamoyl phosphate from bicarbonate: step 1/1.</text>
</comment>
<comment type="pathway">
    <text evidence="1">Pyrimidine metabolism; UMP biosynthesis via de novo pathway; (S)-dihydroorotate from bicarbonate: step 1/3.</text>
</comment>
<comment type="subunit">
    <text evidence="1">Composed of two chains; the small (or glutamine) chain promotes the hydrolysis of glutamine to ammonia, which is used by the large (or ammonia) chain to synthesize carbamoyl phosphate. Tetramer of heterodimers (alpha,beta)4.</text>
</comment>
<comment type="domain">
    <text evidence="1">The large subunit is composed of 2 ATP-grasp domains that are involved in binding the 2 ATP molecules needed for carbamoyl phosphate synthesis. The N-terminal ATP-grasp domain (referred to as the carboxyphosphate synthetic component) catalyzes the ATP-dependent phosphorylation of hydrogencarbonate to carboxyphosphate and the subsequent nucleophilic attack by ammonia to form a carbamate intermediate. The C-terminal ATP-grasp domain (referred to as the carbamoyl phosphate synthetic component) then catalyzes the phosphorylation of carbamate with the second ATP to form the end product carbamoyl phosphate. The reactive and unstable enzyme intermediates are sequentially channeled from one active site to the next through the interior of the protein over a distance of at least 96 A.</text>
</comment>
<comment type="similarity">
    <text evidence="1 2">Belongs to the CarB family.</text>
</comment>
<comment type="sequence caution" evidence="2">
    <conflict type="frameshift">
        <sequence resource="EMBL-CDS" id="AAB85494"/>
    </conflict>
    <text>Produces two separate ORFs.</text>
</comment>
<evidence type="ECO:0000255" key="1">
    <source>
        <dbReference type="HAMAP-Rule" id="MF_01210"/>
    </source>
</evidence>
<evidence type="ECO:0000305" key="2"/>
<dbReference type="EC" id="6.3.4.16" evidence="1"/>
<dbReference type="EC" id="6.3.5.5" evidence="1"/>
<dbReference type="EMBL" id="AE000666">
    <property type="protein sequence ID" value="AAB85493.1"/>
    <property type="status" value="ALT_FRAME"/>
    <property type="molecule type" value="Genomic_DNA"/>
</dbReference>
<dbReference type="EMBL" id="AE000666">
    <property type="protein sequence ID" value="AAB85494.1"/>
    <property type="status" value="ALT_FRAME"/>
    <property type="molecule type" value="Genomic_DNA"/>
</dbReference>
<dbReference type="PIR" id="D69233">
    <property type="entry name" value="D69233"/>
</dbReference>
<dbReference type="PIR" id="E69233">
    <property type="entry name" value="E69233"/>
</dbReference>
<dbReference type="SMR" id="O27077"/>
<dbReference type="FunCoup" id="O27077">
    <property type="interactions" value="198"/>
</dbReference>
<dbReference type="STRING" id="187420.MTH_996"/>
<dbReference type="PaxDb" id="187420-MTH_996"/>
<dbReference type="EnsemblBacteria" id="AAB85493">
    <property type="protein sequence ID" value="AAB85493"/>
    <property type="gene ID" value="MTH_996"/>
</dbReference>
<dbReference type="EnsemblBacteria" id="AAB85494">
    <property type="protein sequence ID" value="AAB85494"/>
    <property type="gene ID" value="MTH_997"/>
</dbReference>
<dbReference type="KEGG" id="mth:MTH_996"/>
<dbReference type="KEGG" id="mth:MTH_997"/>
<dbReference type="PATRIC" id="fig|187420.15.peg.979"/>
<dbReference type="HOGENOM" id="CLU_000513_1_0_2"/>
<dbReference type="InParanoid" id="O27077"/>
<dbReference type="UniPathway" id="UPA00068">
    <property type="reaction ID" value="UER00171"/>
</dbReference>
<dbReference type="UniPathway" id="UPA00070">
    <property type="reaction ID" value="UER00115"/>
</dbReference>
<dbReference type="Proteomes" id="UP000005223">
    <property type="component" value="Chromosome"/>
</dbReference>
<dbReference type="GO" id="GO:0005737">
    <property type="term" value="C:cytoplasm"/>
    <property type="evidence" value="ECO:0007669"/>
    <property type="project" value="TreeGrafter"/>
</dbReference>
<dbReference type="GO" id="GO:0005524">
    <property type="term" value="F:ATP binding"/>
    <property type="evidence" value="ECO:0007669"/>
    <property type="project" value="UniProtKB-UniRule"/>
</dbReference>
<dbReference type="GO" id="GO:0004087">
    <property type="term" value="F:carbamoyl-phosphate synthase (ammonia) activity"/>
    <property type="evidence" value="ECO:0007669"/>
    <property type="project" value="RHEA"/>
</dbReference>
<dbReference type="GO" id="GO:0004088">
    <property type="term" value="F:carbamoyl-phosphate synthase (glutamine-hydrolyzing) activity"/>
    <property type="evidence" value="ECO:0007669"/>
    <property type="project" value="UniProtKB-UniRule"/>
</dbReference>
<dbReference type="GO" id="GO:0046872">
    <property type="term" value="F:metal ion binding"/>
    <property type="evidence" value="ECO:0007669"/>
    <property type="project" value="UniProtKB-KW"/>
</dbReference>
<dbReference type="GO" id="GO:0044205">
    <property type="term" value="P:'de novo' UMP biosynthetic process"/>
    <property type="evidence" value="ECO:0007669"/>
    <property type="project" value="UniProtKB-UniRule"/>
</dbReference>
<dbReference type="GO" id="GO:0006541">
    <property type="term" value="P:glutamine metabolic process"/>
    <property type="evidence" value="ECO:0007669"/>
    <property type="project" value="TreeGrafter"/>
</dbReference>
<dbReference type="GO" id="GO:0006526">
    <property type="term" value="P:L-arginine biosynthetic process"/>
    <property type="evidence" value="ECO:0007669"/>
    <property type="project" value="UniProtKB-UniRule"/>
</dbReference>
<dbReference type="CDD" id="cd01424">
    <property type="entry name" value="MGS_CPS_II"/>
    <property type="match status" value="1"/>
</dbReference>
<dbReference type="FunFam" id="1.10.1030.10:FF:000002">
    <property type="entry name" value="Carbamoyl-phosphate synthase large chain"/>
    <property type="match status" value="1"/>
</dbReference>
<dbReference type="FunFam" id="3.30.1490.20:FF:000001">
    <property type="entry name" value="Carbamoyl-phosphate synthase large chain"/>
    <property type="match status" value="1"/>
</dbReference>
<dbReference type="FunFam" id="3.30.470.20:FF:000001">
    <property type="entry name" value="Carbamoyl-phosphate synthase large chain"/>
    <property type="match status" value="1"/>
</dbReference>
<dbReference type="FunFam" id="3.30.470.20:FF:000013">
    <property type="entry name" value="Carbamoyl-phosphate synthase large chain"/>
    <property type="match status" value="1"/>
</dbReference>
<dbReference type="FunFam" id="3.40.50.20:FF:000001">
    <property type="entry name" value="Carbamoyl-phosphate synthase large chain"/>
    <property type="match status" value="1"/>
</dbReference>
<dbReference type="FunFam" id="3.40.50.20:FF:000002">
    <property type="entry name" value="Carbamoyl-phosphate synthase large chain"/>
    <property type="match status" value="1"/>
</dbReference>
<dbReference type="Gene3D" id="3.40.50.20">
    <property type="match status" value="2"/>
</dbReference>
<dbReference type="Gene3D" id="3.30.1490.20">
    <property type="entry name" value="ATP-grasp fold, A domain"/>
    <property type="match status" value="1"/>
</dbReference>
<dbReference type="Gene3D" id="3.30.470.20">
    <property type="entry name" value="ATP-grasp fold, B domain"/>
    <property type="match status" value="2"/>
</dbReference>
<dbReference type="Gene3D" id="1.10.1030.10">
    <property type="entry name" value="Carbamoyl-phosphate synthetase, large subunit oligomerisation domain"/>
    <property type="match status" value="1"/>
</dbReference>
<dbReference type="Gene3D" id="3.40.50.1380">
    <property type="entry name" value="Methylglyoxal synthase-like domain"/>
    <property type="match status" value="1"/>
</dbReference>
<dbReference type="HAMAP" id="MF_01210_A">
    <property type="entry name" value="CPSase_L_chain_A"/>
    <property type="match status" value="1"/>
</dbReference>
<dbReference type="HAMAP" id="MF_01210_B">
    <property type="entry name" value="CPSase_L_chain_B"/>
    <property type="match status" value="1"/>
</dbReference>
<dbReference type="InterPro" id="IPR011761">
    <property type="entry name" value="ATP-grasp"/>
</dbReference>
<dbReference type="InterPro" id="IPR013815">
    <property type="entry name" value="ATP_grasp_subdomain_1"/>
</dbReference>
<dbReference type="InterPro" id="IPR006275">
    <property type="entry name" value="CarbamoylP_synth_lsu"/>
</dbReference>
<dbReference type="InterPro" id="IPR005480">
    <property type="entry name" value="CarbamoylP_synth_lsu_oligo"/>
</dbReference>
<dbReference type="InterPro" id="IPR036897">
    <property type="entry name" value="CarbamoylP_synth_lsu_oligo_sf"/>
</dbReference>
<dbReference type="InterPro" id="IPR005479">
    <property type="entry name" value="CbamoylP_synth_lsu-like_ATP-bd"/>
</dbReference>
<dbReference type="InterPro" id="IPR005483">
    <property type="entry name" value="CbamoylP_synth_lsu_CPSase_dom"/>
</dbReference>
<dbReference type="InterPro" id="IPR011607">
    <property type="entry name" value="MGS-like_dom"/>
</dbReference>
<dbReference type="InterPro" id="IPR036914">
    <property type="entry name" value="MGS-like_dom_sf"/>
</dbReference>
<dbReference type="InterPro" id="IPR033937">
    <property type="entry name" value="MGS_CPS_CarB"/>
</dbReference>
<dbReference type="InterPro" id="IPR016185">
    <property type="entry name" value="PreATP-grasp_dom_sf"/>
</dbReference>
<dbReference type="NCBIfam" id="TIGR01369">
    <property type="entry name" value="CPSaseII_lrg"/>
    <property type="match status" value="1"/>
</dbReference>
<dbReference type="NCBIfam" id="NF003671">
    <property type="entry name" value="PRK05294.1"/>
    <property type="match status" value="1"/>
</dbReference>
<dbReference type="NCBIfam" id="NF009455">
    <property type="entry name" value="PRK12815.1"/>
    <property type="match status" value="1"/>
</dbReference>
<dbReference type="PANTHER" id="PTHR11405:SF53">
    <property type="entry name" value="CARBAMOYL-PHOSPHATE SYNTHASE [AMMONIA], MITOCHONDRIAL"/>
    <property type="match status" value="1"/>
</dbReference>
<dbReference type="PANTHER" id="PTHR11405">
    <property type="entry name" value="CARBAMOYLTRANSFERASE FAMILY MEMBER"/>
    <property type="match status" value="1"/>
</dbReference>
<dbReference type="Pfam" id="PF02786">
    <property type="entry name" value="CPSase_L_D2"/>
    <property type="match status" value="2"/>
</dbReference>
<dbReference type="Pfam" id="PF02787">
    <property type="entry name" value="CPSase_L_D3"/>
    <property type="match status" value="1"/>
</dbReference>
<dbReference type="Pfam" id="PF02142">
    <property type="entry name" value="MGS"/>
    <property type="match status" value="1"/>
</dbReference>
<dbReference type="PRINTS" id="PR00098">
    <property type="entry name" value="CPSASE"/>
</dbReference>
<dbReference type="SMART" id="SM01096">
    <property type="entry name" value="CPSase_L_D3"/>
    <property type="match status" value="1"/>
</dbReference>
<dbReference type="SMART" id="SM00851">
    <property type="entry name" value="MGS"/>
    <property type="match status" value="1"/>
</dbReference>
<dbReference type="SUPFAM" id="SSF48108">
    <property type="entry name" value="Carbamoyl phosphate synthetase, large subunit connection domain"/>
    <property type="match status" value="1"/>
</dbReference>
<dbReference type="SUPFAM" id="SSF56059">
    <property type="entry name" value="Glutathione synthetase ATP-binding domain-like"/>
    <property type="match status" value="2"/>
</dbReference>
<dbReference type="SUPFAM" id="SSF52335">
    <property type="entry name" value="Methylglyoxal synthase-like"/>
    <property type="match status" value="1"/>
</dbReference>
<dbReference type="SUPFAM" id="SSF52440">
    <property type="entry name" value="PreATP-grasp domain"/>
    <property type="match status" value="2"/>
</dbReference>
<dbReference type="PROSITE" id="PS50975">
    <property type="entry name" value="ATP_GRASP"/>
    <property type="match status" value="2"/>
</dbReference>
<dbReference type="PROSITE" id="PS00866">
    <property type="entry name" value="CPSASE_1"/>
    <property type="match status" value="2"/>
</dbReference>
<dbReference type="PROSITE" id="PS00867">
    <property type="entry name" value="CPSASE_2"/>
    <property type="match status" value="2"/>
</dbReference>
<dbReference type="PROSITE" id="PS51855">
    <property type="entry name" value="MGS"/>
    <property type="match status" value="1"/>
</dbReference>
<feature type="chain" id="PRO_0000145080" description="Carbamoyl phosphate synthase large chain">
    <location>
        <begin position="1"/>
        <end position="1060"/>
    </location>
</feature>
<feature type="domain" description="ATP-grasp 1" evidence="1">
    <location>
        <begin position="131"/>
        <end position="326"/>
    </location>
</feature>
<feature type="domain" description="ATP-grasp 2" evidence="1">
    <location>
        <begin position="664"/>
        <end position="858"/>
    </location>
</feature>
<feature type="domain" description="MGS-like" evidence="1">
    <location>
        <begin position="925"/>
        <end position="1060"/>
    </location>
</feature>
<feature type="region of interest" description="Carboxyphosphate synthetic domain" evidence="1">
    <location>
        <begin position="1"/>
        <end position="400"/>
    </location>
</feature>
<feature type="region of interest" description="Oligomerization domain" evidence="1">
    <location>
        <begin position="401"/>
        <end position="539"/>
    </location>
</feature>
<feature type="region of interest" description="Carbamoyl phosphate synthetic domain" evidence="1">
    <location>
        <begin position="540"/>
        <end position="926"/>
    </location>
</feature>
<feature type="region of interest" description="Allosteric domain" evidence="1">
    <location>
        <begin position="927"/>
        <end position="1060"/>
    </location>
</feature>
<feature type="binding site" evidence="1">
    <location>
        <position position="127"/>
    </location>
    <ligand>
        <name>ATP</name>
        <dbReference type="ChEBI" id="CHEBI:30616"/>
        <label>1</label>
    </ligand>
</feature>
<feature type="binding site" evidence="1">
    <location>
        <position position="167"/>
    </location>
    <ligand>
        <name>ATP</name>
        <dbReference type="ChEBI" id="CHEBI:30616"/>
        <label>1</label>
    </ligand>
</feature>
<feature type="binding site" evidence="1">
    <location>
        <position position="173"/>
    </location>
    <ligand>
        <name>ATP</name>
        <dbReference type="ChEBI" id="CHEBI:30616"/>
        <label>1</label>
    </ligand>
</feature>
<feature type="binding site" evidence="1">
    <location>
        <position position="174"/>
    </location>
    <ligand>
        <name>ATP</name>
        <dbReference type="ChEBI" id="CHEBI:30616"/>
        <label>1</label>
    </ligand>
</feature>
<feature type="binding site" evidence="1">
    <location>
        <position position="206"/>
    </location>
    <ligand>
        <name>ATP</name>
        <dbReference type="ChEBI" id="CHEBI:30616"/>
        <label>1</label>
    </ligand>
</feature>
<feature type="binding site" evidence="1">
    <location>
        <position position="208"/>
    </location>
    <ligand>
        <name>ATP</name>
        <dbReference type="ChEBI" id="CHEBI:30616"/>
        <label>1</label>
    </ligand>
</feature>
<feature type="binding site" evidence="1">
    <location>
        <position position="213"/>
    </location>
    <ligand>
        <name>ATP</name>
        <dbReference type="ChEBI" id="CHEBI:30616"/>
        <label>1</label>
    </ligand>
</feature>
<feature type="binding site" evidence="1">
    <location>
        <position position="240"/>
    </location>
    <ligand>
        <name>ATP</name>
        <dbReference type="ChEBI" id="CHEBI:30616"/>
        <label>1</label>
    </ligand>
</feature>
<feature type="binding site" evidence="1">
    <location>
        <position position="241"/>
    </location>
    <ligand>
        <name>ATP</name>
        <dbReference type="ChEBI" id="CHEBI:30616"/>
        <label>1</label>
    </ligand>
</feature>
<feature type="binding site" evidence="1">
    <location>
        <position position="242"/>
    </location>
    <ligand>
        <name>ATP</name>
        <dbReference type="ChEBI" id="CHEBI:30616"/>
        <label>1</label>
    </ligand>
</feature>
<feature type="binding site" evidence="1">
    <location>
        <position position="283"/>
    </location>
    <ligand>
        <name>ATP</name>
        <dbReference type="ChEBI" id="CHEBI:30616"/>
        <label>1</label>
    </ligand>
</feature>
<feature type="binding site" evidence="1">
    <location>
        <position position="283"/>
    </location>
    <ligand>
        <name>Mg(2+)</name>
        <dbReference type="ChEBI" id="CHEBI:18420"/>
        <label>1</label>
    </ligand>
</feature>
<feature type="binding site" evidence="1">
    <location>
        <position position="283"/>
    </location>
    <ligand>
        <name>Mn(2+)</name>
        <dbReference type="ChEBI" id="CHEBI:29035"/>
        <label>1</label>
    </ligand>
</feature>
<feature type="binding site" evidence="1">
    <location>
        <position position="297"/>
    </location>
    <ligand>
        <name>ATP</name>
        <dbReference type="ChEBI" id="CHEBI:30616"/>
        <label>1</label>
    </ligand>
</feature>
<feature type="binding site" evidence="1">
    <location>
        <position position="297"/>
    </location>
    <ligand>
        <name>Mg(2+)</name>
        <dbReference type="ChEBI" id="CHEBI:18420"/>
        <label>1</label>
    </ligand>
</feature>
<feature type="binding site" evidence="1">
    <location>
        <position position="297"/>
    </location>
    <ligand>
        <name>Mg(2+)</name>
        <dbReference type="ChEBI" id="CHEBI:18420"/>
        <label>2</label>
    </ligand>
</feature>
<feature type="binding site" evidence="1">
    <location>
        <position position="297"/>
    </location>
    <ligand>
        <name>Mn(2+)</name>
        <dbReference type="ChEBI" id="CHEBI:29035"/>
        <label>1</label>
    </ligand>
</feature>
<feature type="binding site" evidence="1">
    <location>
        <position position="297"/>
    </location>
    <ligand>
        <name>Mn(2+)</name>
        <dbReference type="ChEBI" id="CHEBI:29035"/>
        <label>2</label>
    </ligand>
</feature>
<feature type="binding site" evidence="1">
    <location>
        <position position="299"/>
    </location>
    <ligand>
        <name>Mg(2+)</name>
        <dbReference type="ChEBI" id="CHEBI:18420"/>
        <label>2</label>
    </ligand>
</feature>
<feature type="binding site" evidence="1">
    <location>
        <position position="299"/>
    </location>
    <ligand>
        <name>Mn(2+)</name>
        <dbReference type="ChEBI" id="CHEBI:29035"/>
        <label>2</label>
    </ligand>
</feature>
<feature type="binding site" evidence="1">
    <location>
        <position position="700"/>
    </location>
    <ligand>
        <name>ATP</name>
        <dbReference type="ChEBI" id="CHEBI:30616"/>
        <label>2</label>
    </ligand>
</feature>
<feature type="binding site" evidence="1">
    <location>
        <position position="739"/>
    </location>
    <ligand>
        <name>ATP</name>
        <dbReference type="ChEBI" id="CHEBI:30616"/>
        <label>2</label>
    </ligand>
</feature>
<feature type="binding site" evidence="1">
    <location>
        <position position="741"/>
    </location>
    <ligand>
        <name>ATP</name>
        <dbReference type="ChEBI" id="CHEBI:30616"/>
        <label>2</label>
    </ligand>
</feature>
<feature type="binding site" evidence="1">
    <location>
        <position position="746"/>
    </location>
    <ligand>
        <name>ATP</name>
        <dbReference type="ChEBI" id="CHEBI:30616"/>
        <label>2</label>
    </ligand>
</feature>
<feature type="binding site" evidence="1">
    <location>
        <position position="771"/>
    </location>
    <ligand>
        <name>ATP</name>
        <dbReference type="ChEBI" id="CHEBI:30616"/>
        <label>2</label>
    </ligand>
</feature>
<feature type="binding site" evidence="1">
    <location>
        <position position="772"/>
    </location>
    <ligand>
        <name>ATP</name>
        <dbReference type="ChEBI" id="CHEBI:30616"/>
        <label>2</label>
    </ligand>
</feature>
<feature type="binding site" evidence="1">
    <location>
        <position position="773"/>
    </location>
    <ligand>
        <name>ATP</name>
        <dbReference type="ChEBI" id="CHEBI:30616"/>
        <label>2</label>
    </ligand>
</feature>
<feature type="binding site" evidence="1">
    <location>
        <position position="774"/>
    </location>
    <ligand>
        <name>ATP</name>
        <dbReference type="ChEBI" id="CHEBI:30616"/>
        <label>2</label>
    </ligand>
</feature>
<feature type="binding site" evidence="1">
    <location>
        <position position="814"/>
    </location>
    <ligand>
        <name>ATP</name>
        <dbReference type="ChEBI" id="CHEBI:30616"/>
        <label>2</label>
    </ligand>
</feature>
<feature type="binding site" evidence="1">
    <location>
        <position position="814"/>
    </location>
    <ligand>
        <name>Mg(2+)</name>
        <dbReference type="ChEBI" id="CHEBI:18420"/>
        <label>3</label>
    </ligand>
</feature>
<feature type="binding site" evidence="1">
    <location>
        <position position="814"/>
    </location>
    <ligand>
        <name>Mn(2+)</name>
        <dbReference type="ChEBI" id="CHEBI:29035"/>
        <label>3</label>
    </ligand>
</feature>
<feature type="binding site" evidence="1">
    <location>
        <position position="829"/>
    </location>
    <ligand>
        <name>ATP</name>
        <dbReference type="ChEBI" id="CHEBI:30616"/>
        <label>2</label>
    </ligand>
</feature>
<feature type="binding site" evidence="1">
    <location>
        <position position="829"/>
    </location>
    <ligand>
        <name>Mg(2+)</name>
        <dbReference type="ChEBI" id="CHEBI:18420"/>
        <label>3</label>
    </ligand>
</feature>
<feature type="binding site" evidence="1">
    <location>
        <position position="829"/>
    </location>
    <ligand>
        <name>Mg(2+)</name>
        <dbReference type="ChEBI" id="CHEBI:18420"/>
        <label>4</label>
    </ligand>
</feature>
<feature type="binding site" evidence="1">
    <location>
        <position position="829"/>
    </location>
    <ligand>
        <name>Mn(2+)</name>
        <dbReference type="ChEBI" id="CHEBI:29035"/>
        <label>3</label>
    </ligand>
</feature>
<feature type="binding site" evidence="1">
    <location>
        <position position="829"/>
    </location>
    <ligand>
        <name>Mn(2+)</name>
        <dbReference type="ChEBI" id="CHEBI:29035"/>
        <label>4</label>
    </ligand>
</feature>
<feature type="binding site" evidence="1">
    <location>
        <position position="831"/>
    </location>
    <ligand>
        <name>Mg(2+)</name>
        <dbReference type="ChEBI" id="CHEBI:18420"/>
        <label>4</label>
    </ligand>
</feature>
<feature type="binding site" evidence="1">
    <location>
        <position position="831"/>
    </location>
    <ligand>
        <name>Mn(2+)</name>
        <dbReference type="ChEBI" id="CHEBI:29035"/>
        <label>4</label>
    </ligand>
</feature>
<name>CARB_METTH</name>
<accession>O27077</accession>
<accession>O27078</accession>
<reference key="1">
    <citation type="journal article" date="1997" name="J. Bacteriol.">
        <title>Complete genome sequence of Methanobacterium thermoautotrophicum deltaH: functional analysis and comparative genomics.</title>
        <authorList>
            <person name="Smith D.R."/>
            <person name="Doucette-Stamm L.A."/>
            <person name="Deloughery C."/>
            <person name="Lee H.-M."/>
            <person name="Dubois J."/>
            <person name="Aldredge T."/>
            <person name="Bashirzadeh R."/>
            <person name="Blakely D."/>
            <person name="Cook R."/>
            <person name="Gilbert K."/>
            <person name="Harrison D."/>
            <person name="Hoang L."/>
            <person name="Keagle P."/>
            <person name="Lumm W."/>
            <person name="Pothier B."/>
            <person name="Qiu D."/>
            <person name="Spadafora R."/>
            <person name="Vicare R."/>
            <person name="Wang Y."/>
            <person name="Wierzbowski J."/>
            <person name="Gibson R."/>
            <person name="Jiwani N."/>
            <person name="Caruso A."/>
            <person name="Bush D."/>
            <person name="Safer H."/>
            <person name="Patwell D."/>
            <person name="Prabhakar S."/>
            <person name="McDougall S."/>
            <person name="Shimer G."/>
            <person name="Goyal A."/>
            <person name="Pietrovski S."/>
            <person name="Church G.M."/>
            <person name="Daniels C.J."/>
            <person name="Mao J.-I."/>
            <person name="Rice P."/>
            <person name="Noelling J."/>
            <person name="Reeve J.N."/>
        </authorList>
    </citation>
    <scope>NUCLEOTIDE SEQUENCE [LARGE SCALE GENOMIC DNA]</scope>
    <source>
        <strain>ATCC 29096 / DSM 1053 / JCM 10044 / NBRC 100330 / Delta H</strain>
    </source>
</reference>
<gene>
    <name evidence="1" type="primary">carB</name>
    <name type="ordered locus">MTH_996/MTH_997</name>
</gene>
<protein>
    <recommendedName>
        <fullName evidence="1">Carbamoyl phosphate synthase large chain</fullName>
        <ecNumber evidence="1">6.3.4.16</ecNumber>
        <ecNumber evidence="1">6.3.5.5</ecNumber>
    </recommendedName>
    <alternativeName>
        <fullName evidence="1">Carbamoyl phosphate synthetase ammonia chain</fullName>
    </alternativeName>
</protein>
<keyword id="KW-0028">Amino-acid biosynthesis</keyword>
<keyword id="KW-0055">Arginine biosynthesis</keyword>
<keyword id="KW-0067">ATP-binding</keyword>
<keyword id="KW-0436">Ligase</keyword>
<keyword id="KW-0460">Magnesium</keyword>
<keyword id="KW-0464">Manganese</keyword>
<keyword id="KW-0479">Metal-binding</keyword>
<keyword id="KW-0547">Nucleotide-binding</keyword>
<keyword id="KW-0665">Pyrimidine biosynthesis</keyword>
<keyword id="KW-1185">Reference proteome</keyword>
<keyword id="KW-0677">Repeat</keyword>